<sequence>MILNFIIDSSSFEKGLGNIAIWSKLNDPKLTINAYLPLFTIQELDFQRFKRKSVVAKRALHFIDLLQDSTSFKLHLEYPELNEAISWNETVKLCQQNSHTSLSQHQISVIPIRFKKLLKSCYYKCHYKSHDLDEDIDHTNEKSDPDDKGWVLVTEDDTVRSLATQFQIPFISVVEADAIINACIKDKSYVVNEKFSKTVIKKANKVKEQEDGKKVFVTDFKNDFLAPRAKSGELWTPTSAKNKS</sequence>
<evidence type="ECO:0000250" key="1"/>
<evidence type="ECO:0007829" key="2">
    <source>
        <dbReference type="PDB" id="7QHY"/>
    </source>
</evidence>
<organism>
    <name type="scientific">Kluyveromyces lactis (strain ATCC 8585 / CBS 2359 / DSM 70799 / NBRC 1267 / NRRL Y-1140 / WM37)</name>
    <name type="common">Yeast</name>
    <name type="synonym">Candida sphaerica</name>
    <dbReference type="NCBI Taxonomy" id="284590"/>
    <lineage>
        <taxon>Eukaryota</taxon>
        <taxon>Fungi</taxon>
        <taxon>Dikarya</taxon>
        <taxon>Ascomycota</taxon>
        <taxon>Saccharomycotina</taxon>
        <taxon>Saccharomycetes</taxon>
        <taxon>Saccharomycetales</taxon>
        <taxon>Saccharomycetaceae</taxon>
        <taxon>Kluyveromyces</taxon>
    </lineage>
</organism>
<keyword id="KW-0002">3D-structure</keyword>
<keyword id="KW-0963">Cytoplasm</keyword>
<keyword id="KW-0866">Nonsense-mediated mRNA decay</keyword>
<keyword id="KW-1185">Reference proteome</keyword>
<proteinExistence type="evidence at protein level"/>
<protein>
    <recommendedName>
        <fullName>Nonsense-mediated decay protein 4</fullName>
    </recommendedName>
</protein>
<accession>Q6CVZ8</accession>
<gene>
    <name type="primary">NMD4</name>
    <name type="ordered locus">KLLA0B08107g</name>
</gene>
<feature type="chain" id="PRO_0000096878" description="Nonsense-mediated decay protein 4">
    <location>
        <begin position="1"/>
        <end position="244"/>
    </location>
</feature>
<feature type="strand" evidence="2">
    <location>
        <begin position="2"/>
        <end position="7"/>
    </location>
</feature>
<feature type="helix" evidence="2">
    <location>
        <begin position="9"/>
        <end position="22"/>
    </location>
</feature>
<feature type="strand" evidence="2">
    <location>
        <begin position="30"/>
        <end position="36"/>
    </location>
</feature>
<feature type="helix" evidence="2">
    <location>
        <begin position="38"/>
        <end position="49"/>
    </location>
</feature>
<feature type="helix" evidence="2">
    <location>
        <begin position="54"/>
        <end position="65"/>
    </location>
</feature>
<feature type="strand" evidence="2">
    <location>
        <begin position="70"/>
        <end position="76"/>
    </location>
</feature>
<feature type="helix" evidence="2">
    <location>
        <begin position="79"/>
        <end position="84"/>
    </location>
</feature>
<feature type="helix" evidence="2">
    <location>
        <begin position="87"/>
        <end position="95"/>
    </location>
</feature>
<feature type="helix" evidence="2">
    <location>
        <begin position="104"/>
        <end position="108"/>
    </location>
</feature>
<feature type="helix" evidence="2">
    <location>
        <begin position="112"/>
        <end position="125"/>
    </location>
</feature>
<feature type="strand" evidence="2">
    <location>
        <begin position="151"/>
        <end position="153"/>
    </location>
</feature>
<feature type="helix" evidence="2">
    <location>
        <begin position="157"/>
        <end position="165"/>
    </location>
</feature>
<feature type="helix" evidence="2">
    <location>
        <begin position="173"/>
        <end position="183"/>
    </location>
</feature>
<feature type="helix" evidence="2">
    <location>
        <begin position="220"/>
        <end position="224"/>
    </location>
</feature>
<comment type="function">
    <text evidence="1">Involved in nonsense-mediated decay of mRNAs containing premature stop codons.</text>
</comment>
<comment type="subcellular location">
    <subcellularLocation>
        <location evidence="1">Cytoplasm</location>
    </subcellularLocation>
</comment>
<dbReference type="EMBL" id="CR382122">
    <property type="protein sequence ID" value="CAH02284.1"/>
    <property type="molecule type" value="Genomic_DNA"/>
</dbReference>
<dbReference type="RefSeq" id="XP_451891.1">
    <property type="nucleotide sequence ID" value="XM_451891.1"/>
</dbReference>
<dbReference type="PDB" id="7QHY">
    <property type="method" value="X-ray"/>
    <property type="resolution" value="2.45 A"/>
    <property type="chains" value="A/B=2-244"/>
</dbReference>
<dbReference type="PDBsum" id="7QHY"/>
<dbReference type="SMR" id="Q6CVZ8"/>
<dbReference type="FunCoup" id="Q6CVZ8">
    <property type="interactions" value="46"/>
</dbReference>
<dbReference type="PaxDb" id="284590-Q6CVZ8"/>
<dbReference type="KEGG" id="kla:KLLA0_B08107g"/>
<dbReference type="eggNOG" id="ENOG502RYBU">
    <property type="taxonomic scope" value="Eukaryota"/>
</dbReference>
<dbReference type="HOGENOM" id="CLU_1273151_0_0_1"/>
<dbReference type="InParanoid" id="Q6CVZ8"/>
<dbReference type="OMA" id="PTYTLKE"/>
<dbReference type="Proteomes" id="UP000000598">
    <property type="component" value="Chromosome B"/>
</dbReference>
<dbReference type="GO" id="GO:0005737">
    <property type="term" value="C:cytoplasm"/>
    <property type="evidence" value="ECO:0007669"/>
    <property type="project" value="UniProtKB-SubCell"/>
</dbReference>
<dbReference type="GO" id="GO:0000184">
    <property type="term" value="P:nuclear-transcribed mRNA catabolic process, nonsense-mediated decay"/>
    <property type="evidence" value="ECO:0007669"/>
    <property type="project" value="UniProtKB-KW"/>
</dbReference>
<dbReference type="CDD" id="cd18717">
    <property type="entry name" value="PIN_ScNmd4p-like"/>
    <property type="match status" value="1"/>
</dbReference>
<name>NMD4_KLULA</name>
<reference key="1">
    <citation type="journal article" date="2004" name="Nature">
        <title>Genome evolution in yeasts.</title>
        <authorList>
            <person name="Dujon B."/>
            <person name="Sherman D."/>
            <person name="Fischer G."/>
            <person name="Durrens P."/>
            <person name="Casaregola S."/>
            <person name="Lafontaine I."/>
            <person name="de Montigny J."/>
            <person name="Marck C."/>
            <person name="Neuveglise C."/>
            <person name="Talla E."/>
            <person name="Goffard N."/>
            <person name="Frangeul L."/>
            <person name="Aigle M."/>
            <person name="Anthouard V."/>
            <person name="Babour A."/>
            <person name="Barbe V."/>
            <person name="Barnay S."/>
            <person name="Blanchin S."/>
            <person name="Beckerich J.-M."/>
            <person name="Beyne E."/>
            <person name="Bleykasten C."/>
            <person name="Boisrame A."/>
            <person name="Boyer J."/>
            <person name="Cattolico L."/>
            <person name="Confanioleri F."/>
            <person name="de Daruvar A."/>
            <person name="Despons L."/>
            <person name="Fabre E."/>
            <person name="Fairhead C."/>
            <person name="Ferry-Dumazet H."/>
            <person name="Groppi A."/>
            <person name="Hantraye F."/>
            <person name="Hennequin C."/>
            <person name="Jauniaux N."/>
            <person name="Joyet P."/>
            <person name="Kachouri R."/>
            <person name="Kerrest A."/>
            <person name="Koszul R."/>
            <person name="Lemaire M."/>
            <person name="Lesur I."/>
            <person name="Ma L."/>
            <person name="Muller H."/>
            <person name="Nicaud J.-M."/>
            <person name="Nikolski M."/>
            <person name="Oztas S."/>
            <person name="Ozier-Kalogeropoulos O."/>
            <person name="Pellenz S."/>
            <person name="Potier S."/>
            <person name="Richard G.-F."/>
            <person name="Straub M.-L."/>
            <person name="Suleau A."/>
            <person name="Swennen D."/>
            <person name="Tekaia F."/>
            <person name="Wesolowski-Louvel M."/>
            <person name="Westhof E."/>
            <person name="Wirth B."/>
            <person name="Zeniou-Meyer M."/>
            <person name="Zivanovic Y."/>
            <person name="Bolotin-Fukuhara M."/>
            <person name="Thierry A."/>
            <person name="Bouchier C."/>
            <person name="Caudron B."/>
            <person name="Scarpelli C."/>
            <person name="Gaillardin C."/>
            <person name="Weissenbach J."/>
            <person name="Wincker P."/>
            <person name="Souciet J.-L."/>
        </authorList>
    </citation>
    <scope>NUCLEOTIDE SEQUENCE [LARGE SCALE GENOMIC DNA]</scope>
    <source>
        <strain>ATCC 8585 / CBS 2359 / DSM 70799 / NBRC 1267 / NRRL Y-1140 / WM37</strain>
    </source>
</reference>